<name>TPCM_ASPFU</name>
<proteinExistence type="evidence at transcript level"/>
<accession>Q4WQY5</accession>
<keyword id="KW-0489">Methyltransferase</keyword>
<keyword id="KW-1185">Reference proteome</keyword>
<keyword id="KW-0949">S-adenosyl-L-methionine</keyword>
<keyword id="KW-0808">Transferase</keyword>
<dbReference type="EC" id="2.1.1.-" evidence="4"/>
<dbReference type="EMBL" id="AAHF01000005">
    <property type="protein sequence ID" value="EAL89349.1"/>
    <property type="molecule type" value="Genomic_DNA"/>
</dbReference>
<dbReference type="RefSeq" id="XP_751387.1">
    <property type="nucleotide sequence ID" value="XM_746294.1"/>
</dbReference>
<dbReference type="SMR" id="Q4WQY5"/>
<dbReference type="STRING" id="330879.Q4WQY5"/>
<dbReference type="EnsemblFungi" id="EAL89349">
    <property type="protein sequence ID" value="EAL89349"/>
    <property type="gene ID" value="AFUA_4G14460"/>
</dbReference>
<dbReference type="GeneID" id="3509494"/>
<dbReference type="KEGG" id="afm:AFUA_4G14460"/>
<dbReference type="VEuPathDB" id="FungiDB:Afu4g14460"/>
<dbReference type="eggNOG" id="ENOG502SJ7Q">
    <property type="taxonomic scope" value="Eukaryota"/>
</dbReference>
<dbReference type="HOGENOM" id="CLU_049344_0_1_1"/>
<dbReference type="InParanoid" id="Q4WQY5"/>
<dbReference type="OMA" id="MQAIATQ"/>
<dbReference type="OrthoDB" id="10027013at2759"/>
<dbReference type="Proteomes" id="UP000002530">
    <property type="component" value="Chromosome 4"/>
</dbReference>
<dbReference type="GO" id="GO:0008757">
    <property type="term" value="F:S-adenosylmethionine-dependent methyltransferase activity"/>
    <property type="evidence" value="ECO:0007669"/>
    <property type="project" value="InterPro"/>
</dbReference>
<dbReference type="GO" id="GO:0032259">
    <property type="term" value="P:methylation"/>
    <property type="evidence" value="ECO:0007669"/>
    <property type="project" value="UniProtKB-KW"/>
</dbReference>
<dbReference type="GO" id="GO:0044550">
    <property type="term" value="P:secondary metabolite biosynthetic process"/>
    <property type="evidence" value="ECO:0000317"/>
    <property type="project" value="AspGD"/>
</dbReference>
<dbReference type="FunFam" id="3.40.50.150:FF:000692">
    <property type="entry name" value="Methyltransferase tpcM"/>
    <property type="match status" value="1"/>
</dbReference>
<dbReference type="Gene3D" id="3.40.50.150">
    <property type="entry name" value="Vaccinia Virus protein VP39"/>
    <property type="match status" value="1"/>
</dbReference>
<dbReference type="InterPro" id="IPR051052">
    <property type="entry name" value="Diverse_substrate_MTase"/>
</dbReference>
<dbReference type="InterPro" id="IPR013216">
    <property type="entry name" value="Methyltransf_11"/>
</dbReference>
<dbReference type="InterPro" id="IPR029063">
    <property type="entry name" value="SAM-dependent_MTases_sf"/>
</dbReference>
<dbReference type="PANTHER" id="PTHR44942">
    <property type="entry name" value="METHYLTRANSF_11 DOMAIN-CONTAINING PROTEIN"/>
    <property type="match status" value="1"/>
</dbReference>
<dbReference type="PANTHER" id="PTHR44942:SF4">
    <property type="entry name" value="METHYLTRANSFERASE TYPE 11 DOMAIN-CONTAINING PROTEIN"/>
    <property type="match status" value="1"/>
</dbReference>
<dbReference type="Pfam" id="PF08241">
    <property type="entry name" value="Methyltransf_11"/>
    <property type="match status" value="1"/>
</dbReference>
<dbReference type="SUPFAM" id="SSF53335">
    <property type="entry name" value="S-adenosyl-L-methionine-dependent methyltransferases"/>
    <property type="match status" value="1"/>
</dbReference>
<comment type="function">
    <text evidence="1 3 4 5">Methyltransferase; part of the gene cluster that mediates the biosynthesis of trypacidin, a mycotoxin with antiprotozoal activity and that plays a role in the infection process (PubMed:26242966, PubMed:26278536). The pathway begins with the synthesis of atrochrysone thioester by the polyketide synthase (PKS) tpcC (PubMed:26242966). The atrochrysone carboxyl ACP thioesterase tpcB then breaks the thioester bond and releases the atrochrysone carboxylic acid from tpcC (PubMed:26242966). The decarboxylase tpcK converts atrochrysone carboxylic acid to atrochrysone which is further reduced into emodin anthrone (PubMed:26242966). The next step is performed by the emodin anthrone oxygenase tpcL that catalyzes the oxidation of emodinanthrone to emodin (PubMed:26242966). Emodin O-methyltransferase encoded by tpcA catalyzes methylation of the 8-hydroxy group of emodin to form questin (PubMed:26242966). Ring cleavage of questin by questin oxidase tpcI leads to desmethylsulochrin via several intermediates including questin epoxide (By similarity). Another methylation step catalyzed by tpcM leads to the formation of sulochrin which is further converted to monomethylsulfochrin by tpcH. Finally, the tpcJ catalyzes the conversion of monomethylsulfochrin to trypacidin (PubMed:26242966). Trypacidin is toxic for human pulmonary and bronchial epithelial cells by initiating the intracellular formation of nitric oxide (NO) and hydrogen peroxide (H(2)O(2)), thus triggering host necrotic cell death (PubMed:22319557). The trypacidin pathway is also able to produce endocrocin via a distinct route from the endocrocin Enc pathway (PubMed:26242966).</text>
</comment>
<comment type="pathway">
    <text evidence="10">Secondary metabolite biosynthesis.</text>
</comment>
<comment type="tissue specificity">
    <text evidence="9">Specifically expressed in conidia (PubMed:22319557).</text>
</comment>
<comment type="similarity">
    <text evidence="8">Belongs to the methyltransferase superfamily.</text>
</comment>
<evidence type="ECO:0000250" key="1">
    <source>
        <dbReference type="UniProtKB" id="Q0CCX8"/>
    </source>
</evidence>
<evidence type="ECO:0000255" key="2"/>
<evidence type="ECO:0000269" key="3">
    <source>
    </source>
</evidence>
<evidence type="ECO:0000269" key="4">
    <source>
    </source>
</evidence>
<evidence type="ECO:0000269" key="5">
    <source>
    </source>
</evidence>
<evidence type="ECO:0000303" key="6">
    <source>
    </source>
</evidence>
<evidence type="ECO:0000303" key="7">
    <source>
    </source>
</evidence>
<evidence type="ECO:0000305" key="8"/>
<evidence type="ECO:0000305" key="9">
    <source>
    </source>
</evidence>
<evidence type="ECO:0000305" key="10">
    <source>
    </source>
</evidence>
<gene>
    <name evidence="6" type="primary">tpcM</name>
    <name evidence="7" type="synonym">tynM</name>
    <name type="ORF">AFUA_4G14460</name>
</gene>
<protein>
    <recommendedName>
        <fullName evidence="6">Methyltransferase tpcM</fullName>
        <ecNumber evidence="4">2.1.1.-</ecNumber>
    </recommendedName>
    <alternativeName>
        <fullName evidence="6">Geodin synthesis protein G</fullName>
    </alternativeName>
</protein>
<sequence length="319" mass="35534">MAVPQSIPPPTAAPIESKDQVFARSKAFWDNYLRGRPQVPPSFFQRIYRYHREHGGRFGTVHDVGAGIGPYAGELRSQFPHVIVSDIVPKNVQLAEAHLGRDGFRYRAAPVEVADDLPPGSVDLAFATNVMHFADQHAAMQAIATQLRPGGTFACAGFGPARFDDPDIQDVWERISQQGGRILLGMAEHPPDTINVMSRSSKEYNVAPLEPQWFRPGALRIRLNMAQGGITGLLPPERQQEVTDPDFAGPRDVVVYETNEEWRFETDWEGFLQHFRSFPHAGADPAAFTGLLQELKDLLDEGRCLRGCWPATLILATRR</sequence>
<reference key="1">
    <citation type="journal article" date="2005" name="Nature">
        <title>Genomic sequence of the pathogenic and allergenic filamentous fungus Aspergillus fumigatus.</title>
        <authorList>
            <person name="Nierman W.C."/>
            <person name="Pain A."/>
            <person name="Anderson M.J."/>
            <person name="Wortman J.R."/>
            <person name="Kim H.S."/>
            <person name="Arroyo J."/>
            <person name="Berriman M."/>
            <person name="Abe K."/>
            <person name="Archer D.B."/>
            <person name="Bermejo C."/>
            <person name="Bennett J.W."/>
            <person name="Bowyer P."/>
            <person name="Chen D."/>
            <person name="Collins M."/>
            <person name="Coulsen R."/>
            <person name="Davies R."/>
            <person name="Dyer P.S."/>
            <person name="Farman M.L."/>
            <person name="Fedorova N."/>
            <person name="Fedorova N.D."/>
            <person name="Feldblyum T.V."/>
            <person name="Fischer R."/>
            <person name="Fosker N."/>
            <person name="Fraser A."/>
            <person name="Garcia J.L."/>
            <person name="Garcia M.J."/>
            <person name="Goble A."/>
            <person name="Goldman G.H."/>
            <person name="Gomi K."/>
            <person name="Griffith-Jones S."/>
            <person name="Gwilliam R."/>
            <person name="Haas B.J."/>
            <person name="Haas H."/>
            <person name="Harris D.E."/>
            <person name="Horiuchi H."/>
            <person name="Huang J."/>
            <person name="Humphray S."/>
            <person name="Jimenez J."/>
            <person name="Keller N."/>
            <person name="Khouri H."/>
            <person name="Kitamoto K."/>
            <person name="Kobayashi T."/>
            <person name="Konzack S."/>
            <person name="Kulkarni R."/>
            <person name="Kumagai T."/>
            <person name="Lafton A."/>
            <person name="Latge J.-P."/>
            <person name="Li W."/>
            <person name="Lord A."/>
            <person name="Lu C."/>
            <person name="Majoros W.H."/>
            <person name="May G.S."/>
            <person name="Miller B.L."/>
            <person name="Mohamoud Y."/>
            <person name="Molina M."/>
            <person name="Monod M."/>
            <person name="Mouyna I."/>
            <person name="Mulligan S."/>
            <person name="Murphy L.D."/>
            <person name="O'Neil S."/>
            <person name="Paulsen I."/>
            <person name="Penalva M.A."/>
            <person name="Pertea M."/>
            <person name="Price C."/>
            <person name="Pritchard B.L."/>
            <person name="Quail M.A."/>
            <person name="Rabbinowitsch E."/>
            <person name="Rawlins N."/>
            <person name="Rajandream M.A."/>
            <person name="Reichard U."/>
            <person name="Renauld H."/>
            <person name="Robson G.D."/>
            <person name="Rodriguez de Cordoba S."/>
            <person name="Rodriguez-Pena J.M."/>
            <person name="Ronning C.M."/>
            <person name="Rutter S."/>
            <person name="Salzberg S.L."/>
            <person name="Sanchez M."/>
            <person name="Sanchez-Ferrero J.C."/>
            <person name="Saunders D."/>
            <person name="Seeger K."/>
            <person name="Squares R."/>
            <person name="Squares S."/>
            <person name="Takeuchi M."/>
            <person name="Tekaia F."/>
            <person name="Turner G."/>
            <person name="Vazquez de Aldana C.R."/>
            <person name="Weidman J."/>
            <person name="White O."/>
            <person name="Woodward J.R."/>
            <person name="Yu J.-H."/>
            <person name="Fraser C.M."/>
            <person name="Galagan J.E."/>
            <person name="Asai K."/>
            <person name="Machida M."/>
            <person name="Hall N."/>
            <person name="Barrell B.G."/>
            <person name="Denning D.W."/>
        </authorList>
    </citation>
    <scope>NUCLEOTIDE SEQUENCE [LARGE SCALE GENOMIC DNA]</scope>
    <source>
        <strain>ATCC MYA-4609 / CBS 101355 / FGSC A1100 / Af293</strain>
    </source>
</reference>
<reference key="2">
    <citation type="journal article" date="2012" name="PLoS ONE">
        <title>Trypacidin, a spore-borne toxin from Aspergillus fumigatus, is cytotoxic to lung cells.</title>
        <authorList>
            <person name="Gauthier T."/>
            <person name="Wang X."/>
            <person name="Sifuentes Dos Santos J."/>
            <person name="Fysikopoulos A."/>
            <person name="Tadrist S."/>
            <person name="Canlet C."/>
            <person name="Artigot M.P."/>
            <person name="Loiseau N."/>
            <person name="Oswald I.P."/>
            <person name="Puel O."/>
        </authorList>
    </citation>
    <scope>FUNCTION</scope>
    <scope>TISSUE SPECIFICITY</scope>
</reference>
<reference key="3">
    <citation type="journal article" date="2015" name="Appl. Microbiol. Biotechnol.">
        <title>Identification of the antiphagocytic trypacidin gene cluster in the human-pathogenic fungus Aspergillus fumigatus.</title>
        <authorList>
            <person name="Mattern D.J."/>
            <person name="Schoeler H."/>
            <person name="Weber J."/>
            <person name="Novohradska S."/>
            <person name="Kraibooj K."/>
            <person name="Dahse H.M."/>
            <person name="Hillmann F."/>
            <person name="Valiante V."/>
            <person name="Figge M.T."/>
            <person name="Brakhage A.A."/>
        </authorList>
    </citation>
    <scope>FUNCTION</scope>
</reference>
<reference key="4">
    <citation type="journal article" date="2016" name="Environ. Microbiol.">
        <title>Redundant synthesis of a conidial polyketide by two distinct secondary metabolite clusters in Aspergillus fumigatus.</title>
        <authorList>
            <person name="Throckmorton K."/>
            <person name="Lim F.Y."/>
            <person name="Kontoyiannis D.P."/>
            <person name="Zheng W."/>
            <person name="Keller N.P."/>
        </authorList>
    </citation>
    <scope>FUNCTION</scope>
</reference>
<feature type="chain" id="PRO_0000437071" description="Methyltransferase tpcM">
    <location>
        <begin position="1"/>
        <end position="319"/>
    </location>
</feature>
<feature type="region of interest" description="Methyltransferase domain" evidence="2">
    <location>
        <begin position="63"/>
        <end position="155"/>
    </location>
</feature>
<organism>
    <name type="scientific">Aspergillus fumigatus (strain ATCC MYA-4609 / CBS 101355 / FGSC A1100 / Af293)</name>
    <name type="common">Neosartorya fumigata</name>
    <dbReference type="NCBI Taxonomy" id="330879"/>
    <lineage>
        <taxon>Eukaryota</taxon>
        <taxon>Fungi</taxon>
        <taxon>Dikarya</taxon>
        <taxon>Ascomycota</taxon>
        <taxon>Pezizomycotina</taxon>
        <taxon>Eurotiomycetes</taxon>
        <taxon>Eurotiomycetidae</taxon>
        <taxon>Eurotiales</taxon>
        <taxon>Aspergillaceae</taxon>
        <taxon>Aspergillus</taxon>
        <taxon>Aspergillus subgen. Fumigati</taxon>
    </lineage>
</organism>